<reference key="1">
    <citation type="journal article" date="1998" name="Nat. Genet.">
        <title>Cloning and characterization of a family of novel mammalian DNA (cytosine-5) methyltransferases.</title>
        <authorList>
            <person name="Okano M."/>
            <person name="Xie S."/>
            <person name="Li E."/>
        </authorList>
    </citation>
    <scope>NUCLEOTIDE SEQUENCE [MRNA] (ISOFORM 1)</scope>
    <scope>FUNCTION</scope>
    <scope>CATALYTIC ACTIVITY</scope>
</reference>
<reference key="2">
    <citation type="journal article" date="2004" name="Genome Res.">
        <title>The status, quality, and expansion of the NIH full-length cDNA project: the Mammalian Gene Collection (MGC).</title>
        <authorList>
            <consortium name="The MGC Project Team"/>
        </authorList>
    </citation>
    <scope>NUCLEOTIDE SEQUENCE [LARGE SCALE MRNA] (ISOFORM 1)</scope>
    <source>
        <tissue>Mammary gland</tissue>
    </source>
</reference>
<reference key="3">
    <citation type="journal article" date="2005" name="Science">
        <title>The transcriptional landscape of the mammalian genome.</title>
        <authorList>
            <person name="Carninci P."/>
            <person name="Kasukawa T."/>
            <person name="Katayama S."/>
            <person name="Gough J."/>
            <person name="Frith M.C."/>
            <person name="Maeda N."/>
            <person name="Oyama R."/>
            <person name="Ravasi T."/>
            <person name="Lenhard B."/>
            <person name="Wells C."/>
            <person name="Kodzius R."/>
            <person name="Shimokawa K."/>
            <person name="Bajic V.B."/>
            <person name="Brenner S.E."/>
            <person name="Batalov S."/>
            <person name="Forrest A.R."/>
            <person name="Zavolan M."/>
            <person name="Davis M.J."/>
            <person name="Wilming L.G."/>
            <person name="Aidinis V."/>
            <person name="Allen J.E."/>
            <person name="Ambesi-Impiombato A."/>
            <person name="Apweiler R."/>
            <person name="Aturaliya R.N."/>
            <person name="Bailey T.L."/>
            <person name="Bansal M."/>
            <person name="Baxter L."/>
            <person name="Beisel K.W."/>
            <person name="Bersano T."/>
            <person name="Bono H."/>
            <person name="Chalk A.M."/>
            <person name="Chiu K.P."/>
            <person name="Choudhary V."/>
            <person name="Christoffels A."/>
            <person name="Clutterbuck D.R."/>
            <person name="Crowe M.L."/>
            <person name="Dalla E."/>
            <person name="Dalrymple B.P."/>
            <person name="de Bono B."/>
            <person name="Della Gatta G."/>
            <person name="di Bernardo D."/>
            <person name="Down T."/>
            <person name="Engstrom P."/>
            <person name="Fagiolini M."/>
            <person name="Faulkner G."/>
            <person name="Fletcher C.F."/>
            <person name="Fukushima T."/>
            <person name="Furuno M."/>
            <person name="Futaki S."/>
            <person name="Gariboldi M."/>
            <person name="Georgii-Hemming P."/>
            <person name="Gingeras T.R."/>
            <person name="Gojobori T."/>
            <person name="Green R.E."/>
            <person name="Gustincich S."/>
            <person name="Harbers M."/>
            <person name="Hayashi Y."/>
            <person name="Hensch T.K."/>
            <person name="Hirokawa N."/>
            <person name="Hill D."/>
            <person name="Huminiecki L."/>
            <person name="Iacono M."/>
            <person name="Ikeo K."/>
            <person name="Iwama A."/>
            <person name="Ishikawa T."/>
            <person name="Jakt M."/>
            <person name="Kanapin A."/>
            <person name="Katoh M."/>
            <person name="Kawasawa Y."/>
            <person name="Kelso J."/>
            <person name="Kitamura H."/>
            <person name="Kitano H."/>
            <person name="Kollias G."/>
            <person name="Krishnan S.P."/>
            <person name="Kruger A."/>
            <person name="Kummerfeld S.K."/>
            <person name="Kurochkin I.V."/>
            <person name="Lareau L.F."/>
            <person name="Lazarevic D."/>
            <person name="Lipovich L."/>
            <person name="Liu J."/>
            <person name="Liuni S."/>
            <person name="McWilliam S."/>
            <person name="Madan Babu M."/>
            <person name="Madera M."/>
            <person name="Marchionni L."/>
            <person name="Matsuda H."/>
            <person name="Matsuzawa S."/>
            <person name="Miki H."/>
            <person name="Mignone F."/>
            <person name="Miyake S."/>
            <person name="Morris K."/>
            <person name="Mottagui-Tabar S."/>
            <person name="Mulder N."/>
            <person name="Nakano N."/>
            <person name="Nakauchi H."/>
            <person name="Ng P."/>
            <person name="Nilsson R."/>
            <person name="Nishiguchi S."/>
            <person name="Nishikawa S."/>
            <person name="Nori F."/>
            <person name="Ohara O."/>
            <person name="Okazaki Y."/>
            <person name="Orlando V."/>
            <person name="Pang K.C."/>
            <person name="Pavan W.J."/>
            <person name="Pavesi G."/>
            <person name="Pesole G."/>
            <person name="Petrovsky N."/>
            <person name="Piazza S."/>
            <person name="Reed J."/>
            <person name="Reid J.F."/>
            <person name="Ring B.Z."/>
            <person name="Ringwald M."/>
            <person name="Rost B."/>
            <person name="Ruan Y."/>
            <person name="Salzberg S.L."/>
            <person name="Sandelin A."/>
            <person name="Schneider C."/>
            <person name="Schoenbach C."/>
            <person name="Sekiguchi K."/>
            <person name="Semple C.A."/>
            <person name="Seno S."/>
            <person name="Sessa L."/>
            <person name="Sheng Y."/>
            <person name="Shibata Y."/>
            <person name="Shimada H."/>
            <person name="Shimada K."/>
            <person name="Silva D."/>
            <person name="Sinclair B."/>
            <person name="Sperling S."/>
            <person name="Stupka E."/>
            <person name="Sugiura K."/>
            <person name="Sultana R."/>
            <person name="Takenaka Y."/>
            <person name="Taki K."/>
            <person name="Tammoja K."/>
            <person name="Tan S.L."/>
            <person name="Tang S."/>
            <person name="Taylor M.S."/>
            <person name="Tegner J."/>
            <person name="Teichmann S.A."/>
            <person name="Ueda H.R."/>
            <person name="van Nimwegen E."/>
            <person name="Verardo R."/>
            <person name="Wei C.L."/>
            <person name="Yagi K."/>
            <person name="Yamanishi H."/>
            <person name="Zabarovsky E."/>
            <person name="Zhu S."/>
            <person name="Zimmer A."/>
            <person name="Hide W."/>
            <person name="Bult C."/>
            <person name="Grimmond S.M."/>
            <person name="Teasdale R.D."/>
            <person name="Liu E.T."/>
            <person name="Brusic V."/>
            <person name="Quackenbush J."/>
            <person name="Wahlestedt C."/>
            <person name="Mattick J.S."/>
            <person name="Hume D.A."/>
            <person name="Kai C."/>
            <person name="Sasaki D."/>
            <person name="Tomaru Y."/>
            <person name="Fukuda S."/>
            <person name="Kanamori-Katayama M."/>
            <person name="Suzuki M."/>
            <person name="Aoki J."/>
            <person name="Arakawa T."/>
            <person name="Iida J."/>
            <person name="Imamura K."/>
            <person name="Itoh M."/>
            <person name="Kato T."/>
            <person name="Kawaji H."/>
            <person name="Kawagashira N."/>
            <person name="Kawashima T."/>
            <person name="Kojima M."/>
            <person name="Kondo S."/>
            <person name="Konno H."/>
            <person name="Nakano K."/>
            <person name="Ninomiya N."/>
            <person name="Nishio T."/>
            <person name="Okada M."/>
            <person name="Plessy C."/>
            <person name="Shibata K."/>
            <person name="Shiraki T."/>
            <person name="Suzuki S."/>
            <person name="Tagami M."/>
            <person name="Waki K."/>
            <person name="Watahiki A."/>
            <person name="Okamura-Oho Y."/>
            <person name="Suzuki H."/>
            <person name="Kawai J."/>
            <person name="Hayashizaki Y."/>
        </authorList>
    </citation>
    <scope>NUCLEOTIDE SEQUENCE [LARGE SCALE MRNA] (ISOFORMS 1 AND 2)</scope>
    <source>
        <strain>C57BL/6J</strain>
        <tissue>Brain</tissue>
        <tissue>Embryo</tissue>
        <tissue>Skin</tissue>
    </source>
</reference>
<reference key="4">
    <citation type="journal article" date="2002" name="J. Biol. Chem.">
        <title>A novel Dnmt3a isoform produced from an alternative promoter localizes to euchromatin and its expression correlates with active de novo methylation.</title>
        <authorList>
            <person name="Chen T."/>
            <person name="Ueda Y."/>
            <person name="Xie S."/>
            <person name="Li E."/>
        </authorList>
    </citation>
    <scope>NUCLEOTIDE SEQUENCE [MRNA] (ISOFORM 2)</scope>
    <scope>SUBCELLULAR LOCATION</scope>
    <scope>ALTERNATIVE PROMOTER USAGE</scope>
    <scope>TISSUE SPECIFICITY</scope>
    <source>
        <strain>129/SvJ</strain>
    </source>
</reference>
<reference key="5">
    <citation type="journal article" date="1999" name="Cell">
        <title>DNA methyltransferases Dnmt3a and Dnmt3b are essential for de novo methylation and mammalian development.</title>
        <authorList>
            <person name="Okano M."/>
            <person name="Bell D.W."/>
            <person name="Haber D.A."/>
            <person name="Li E."/>
        </authorList>
    </citation>
    <scope>FUNCTION</scope>
    <scope>DEVELOPMENTAL STAGE</scope>
</reference>
<reference key="6">
    <citation type="journal article" date="2001" name="J. Mol. Biol.">
        <title>Enzymatic properties of recombinant Dnmt3a DNA methyltransferase from mouse: the enzyme modifies DNA in a non-processive manner and also methylates non-CpG correction sites.</title>
        <authorList>
            <person name="Gowher H."/>
            <person name="Jeltsch A."/>
        </authorList>
    </citation>
    <scope>FUNCTION</scope>
    <scope>CATALYTIC ACTIVITY</scope>
</reference>
<reference key="7">
    <citation type="journal article" date="2001" name="J. Mol. Biol.">
        <authorList>
            <person name="Gowher H."/>
            <person name="Jeltsch A."/>
        </authorList>
    </citation>
    <scope>ERRATUM OF PUBMED:11399089</scope>
</reference>
<reference key="8">
    <citation type="journal article" date="2001" name="EMBO J.">
        <title>Dnmt3a binds deacetylases and is recruited by a sequence-specific repressor to silence transcription.</title>
        <authorList>
            <person name="Fuks F."/>
            <person name="Burgers W.A."/>
            <person name="Godin N."/>
            <person name="Kasai M."/>
            <person name="Kouzarides T."/>
        </authorList>
    </citation>
    <scope>FUNCTION</scope>
    <scope>INTERACTION WITH ZBTB18 AND HDAC1</scope>
</reference>
<reference key="9">
    <citation type="journal article" date="2002" name="J. Biol. Chem.">
        <title>Molecular enzymology of the catalytic domains of the Dnmt3a and Dnmt3b DNA methyltransferases.</title>
        <authorList>
            <person name="Gowher H."/>
            <person name="Jeltsch A."/>
        </authorList>
    </citation>
    <scope>FUNCTION</scope>
</reference>
<reference key="10">
    <citation type="journal article" date="2003" name="J. Cell. Biochem.">
        <title>Biochemical fractionation reveals association of DNA methyltransferase (Dnmt) 3b with Dnmt1 and that of Dnmt 3a with a histone H3 methyltransferase and Hdac1.</title>
        <authorList>
            <person name="Datta J."/>
            <person name="Ghoshal K."/>
            <person name="Sharma S.M."/>
            <person name="Tajima S."/>
            <person name="Jacob S.T."/>
        </authorList>
    </citation>
    <scope>IDENTIFICATION IN A COMPLEX WITH HDAC1</scope>
</reference>
<reference key="11">
    <citation type="journal article" date="2004" name="Mol. Cell. Biol.">
        <title>The PWWP domain of Dnmt3a and Dnmt3b is required for directing DNA methylation to the major satellite repeats at pericentric heterochromatin.</title>
        <authorList>
            <person name="Chen T."/>
            <person name="Tsujimoto N."/>
            <person name="Li E."/>
        </authorList>
    </citation>
    <scope>SUBCELLULAR LOCATION</scope>
    <scope>MUTAGENESIS OF 302-VAL-PRO-303 AND 705-PRO-CYS-706</scope>
</reference>
<reference key="12">
    <citation type="journal article" date="2004" name="Nature">
        <title>Essential role for de novo DNA methyltransferase Dnmt3a in paternal and maternal imprinting.</title>
        <authorList>
            <person name="Kaneda M."/>
            <person name="Okano M."/>
            <person name="Hata K."/>
            <person name="Sado T."/>
            <person name="Tsujimoto N."/>
            <person name="Li E."/>
            <person name="Sasaki H."/>
        </authorList>
    </citation>
    <scope>FUNCTION</scope>
</reference>
<reference key="13">
    <citation type="journal article" date="2004" name="Nucleic Acids Res.">
        <title>Modification of de novo DNA methyltransferase 3a (Dnmt3a) by SUMO-1 modulates its interaction with histone deacetylases (HDACs) and its capacity to repress transcription.</title>
        <authorList>
            <person name="Ling Y."/>
            <person name="Sankpal U.T."/>
            <person name="Robertson A.K."/>
            <person name="McNally J.G."/>
            <person name="Karpova T."/>
            <person name="Robertson K.D."/>
        </authorList>
    </citation>
    <scope>SUMOYLATION</scope>
    <scope>INTERACTION WITH UBC9; PIAS1 AND PIAS2</scope>
</reference>
<reference key="14">
    <citation type="journal article" date="2005" name="J. Biol. Chem.">
        <title>Mechanism of stimulation of catalytic activity of Dnmt3A and Dnmt3B DNA-(cytosine-C5)-methyltransferases by Dnmt3L.</title>
        <authorList>
            <person name="Gowher H."/>
            <person name="Liebert K."/>
            <person name="Hermann A."/>
            <person name="Xu G."/>
            <person name="Jeltsch A."/>
        </authorList>
    </citation>
    <scope>ACTIVITY REGULATION</scope>
</reference>
<reference key="15">
    <citation type="journal article" date="2006" name="J. Biochem.">
        <title>Distinct DNA methylation activity of Dnmt3a and Dnmt3b towards naked and nucleosomal DNA.</title>
        <authorList>
            <person name="Takeshima H."/>
            <person name="Suetake I."/>
            <person name="Shimahara H."/>
            <person name="Ura K."/>
            <person name="Tate S."/>
            <person name="Tajima S."/>
        </authorList>
    </citation>
    <scope>FUNCTION</scope>
</reference>
<reference key="16">
    <citation type="journal article" date="2006" name="J. Mol. Biol.">
        <title>Mutational analysis of the catalytic domain of the murine Dnmt3a DNA-(cytosine C5)-methyltransferase.</title>
        <authorList>
            <person name="Gowher H."/>
            <person name="Loutchanwoot P."/>
            <person name="Vorobjeva O."/>
            <person name="Handa V."/>
            <person name="Jurkowska R.Z."/>
            <person name="Jurkowski T.P."/>
            <person name="Jeltsch A."/>
        </authorList>
    </citation>
    <scope>MUTAGENESIS OF PHE-636; GLU-660; ASP-682; CYS-706; ASN-707; SER-710; ARG-716; LYS-717; GLU-752; ASN-753; ARG-788; ARG-827; ARG-832; ARG-878; ARG-881 AND ARG-883</scope>
</reference>
<reference key="17">
    <citation type="journal article" date="2006" name="Nature">
        <title>The Polycomb group protein EZH2 directly controls DNA methylation.</title>
        <authorList>
            <person name="Vire E."/>
            <person name="Brenner C."/>
            <person name="Deplus R."/>
            <person name="Blanchon L."/>
            <person name="Fraga M."/>
            <person name="Didelot C."/>
            <person name="Morey L."/>
            <person name="Van Eynde A."/>
            <person name="Bernard D."/>
            <person name="Vanderwinden J.-M."/>
            <person name="Bollen M."/>
            <person name="Esteller M."/>
            <person name="Di Croce L."/>
            <person name="de Launoit Y."/>
            <person name="Fuks F."/>
        </authorList>
    </citation>
    <scope>INTERACTION WITH THE PRC2/EED-EZH2 COMPLEX</scope>
</reference>
<reference key="18">
    <citation type="journal article" date="2006" name="Nature">
        <authorList>
            <person name="Vire E."/>
            <person name="Brenner C."/>
            <person name="Deplus R."/>
            <person name="Blanchon L."/>
            <person name="Fraga M."/>
            <person name="Didelot C."/>
            <person name="Morey L."/>
            <person name="Van Eynde A."/>
            <person name="Bernard D."/>
            <person name="Vanderwinden J.-M."/>
            <person name="Bollen M."/>
            <person name="Esteller M."/>
            <person name="Di Croce L."/>
            <person name="de Launoit Y."/>
            <person name="Fuks F."/>
        </authorList>
    </citation>
    <scope>ERRATUM OF PUBMED:16357870</scope>
</reference>
<reference key="19">
    <citation type="journal article" date="2007" name="Nature">
        <title>Structure of Dnmt3a bound to Dnmt3L suggests a model for de novo DNA methylation.</title>
        <authorList>
            <person name="Jia D."/>
            <person name="Jurkowska R.Z."/>
            <person name="Zhang X."/>
            <person name="Jeltsch A."/>
            <person name="Cheng X."/>
        </authorList>
    </citation>
    <scope>FUNCTION</scope>
    <scope>ACTIVITY REGULATION</scope>
    <scope>MUTAGENESIS OF PHE-728</scope>
</reference>
<reference key="20">
    <citation type="journal article" date="2008" name="J. Mol. Biol.">
        <title>Mouse Dnmt3a preferentially methylates linker DNA and is inhibited by histone H1.</title>
        <authorList>
            <person name="Takeshima H."/>
            <person name="Suetake I."/>
            <person name="Tajima S."/>
        </authorList>
    </citation>
    <scope>FUNCTION</scope>
</reference>
<reference key="21">
    <citation type="journal article" date="2009" name="EMBO Rep.">
        <title>Np95 interacts with de novo DNA methyltransferases, Dnmt3a and Dnmt3b, and mediates epigenetic silencing of the viral CMV promoter in embryonic stem cells.</title>
        <authorList>
            <person name="Meilinger D."/>
            <person name="Fellinger K."/>
            <person name="Bultmann S."/>
            <person name="Rothbauer U."/>
            <person name="Bonapace I.M."/>
            <person name="Klinkert W.E."/>
            <person name="Spada F."/>
            <person name="Leonhardt H."/>
        </authorList>
    </citation>
    <scope>INTERACTION WITH UHRF1</scope>
</reference>
<reference key="22">
    <citation type="journal article" date="2010" name="Cell">
        <title>A tissue-specific atlas of mouse protein phosphorylation and expression.</title>
        <authorList>
            <person name="Huttlin E.L."/>
            <person name="Jedrychowski M.P."/>
            <person name="Elias J.E."/>
            <person name="Goswami T."/>
            <person name="Rad R."/>
            <person name="Beausoleil S.A."/>
            <person name="Villen J."/>
            <person name="Haas W."/>
            <person name="Sowa M.E."/>
            <person name="Gygi S.P."/>
        </authorList>
    </citation>
    <scope>PHOSPHORYLATION [LARGE SCALE ANALYSIS] AT SER-102; THR-257; SER-386 AND SER-389</scope>
    <scope>IDENTIFICATION BY MASS SPECTROMETRY [LARGE SCALE ANALYSIS]</scope>
    <source>
        <tissue>Kidney</tissue>
        <tissue>Spleen</tissue>
        <tissue>Testis</tissue>
    </source>
</reference>
<reference key="23">
    <citation type="journal article" date="2010" name="J. Biol. Chem.">
        <title>The Dnmt3a PWWP domain reads histone 3 lysine 36 trimethylation and guides DNA methylation.</title>
        <authorList>
            <person name="Dhayalan A."/>
            <person name="Rajavelu A."/>
            <person name="Rathert P."/>
            <person name="Tamas R."/>
            <person name="Jurkowska R.Z."/>
            <person name="Ragozin S."/>
            <person name="Jeltsch A."/>
        </authorList>
    </citation>
    <scope>FUNCTION</scope>
    <scope>SUBCELLULAR LOCATION</scope>
    <scope>DOMAIN</scope>
</reference>
<reference key="24">
    <citation type="journal article" date="2011" name="FEBS J.">
        <title>Auto-methylation of the mouse DNA-(cytosine C5)-methyltransferase Dnmt3a at its active site cysteine residue.</title>
        <authorList>
            <person name="Siddique A.N."/>
            <person name="Jurkowska R.Z."/>
            <person name="Jurkowski T.P."/>
            <person name="Jeltsch A."/>
        </authorList>
    </citation>
    <scope>FUNCTION</scope>
    <scope>CATALYTIC ACTIVITY</scope>
    <scope>ACTIVITY REGULATION</scope>
    <scope>METHYLATION AT CYS-706</scope>
    <scope>MUTAGENESIS OF CYS-706</scope>
</reference>
<reference key="25">
    <citation type="journal article" date="2014" name="Mol. Cell. Proteomics">
        <title>Immunoaffinity enrichment and mass spectrometry analysis of protein methylation.</title>
        <authorList>
            <person name="Guo A."/>
            <person name="Gu H."/>
            <person name="Zhou J."/>
            <person name="Mulhern D."/>
            <person name="Wang Y."/>
            <person name="Lee K.A."/>
            <person name="Yang V."/>
            <person name="Aguiar M."/>
            <person name="Kornhauser J."/>
            <person name="Jia X."/>
            <person name="Ren J."/>
            <person name="Beausoleil S.A."/>
            <person name="Silva J.C."/>
            <person name="Vemulapalli V."/>
            <person name="Bedford M.T."/>
            <person name="Comb M.J."/>
        </authorList>
    </citation>
    <scope>METHYLATION [LARGE SCALE ANALYSIS] AT ARG-167</scope>
    <scope>IDENTIFICATION BY MASS SPECTROMETRY [LARGE SCALE ANALYSIS]</scope>
    <source>
        <tissue>Embryo</tissue>
    </source>
</reference>
<reference key="26">
    <citation type="journal article" date="2019" name="Nat. Genet.">
        <title>Gain-of-function DNMT3A mutations cause microcephalic dwarfism and hypermethylation of Polycomb-regulated regions.</title>
        <authorList>
            <person name="Heyn P."/>
            <person name="Logan C.V."/>
            <person name="Fluteau A."/>
            <person name="Challis R.C."/>
            <person name="Auchynnikava T."/>
            <person name="Martin C.A."/>
            <person name="Marsh J.A."/>
            <person name="Taglini F."/>
            <person name="Kilanowski F."/>
            <person name="Parry D.A."/>
            <person name="Cormier-Daire V."/>
            <person name="Fong C.T."/>
            <person name="Gibson K."/>
            <person name="Hwa V."/>
            <person name="Ibanez L."/>
            <person name="Robertson S.P."/>
            <person name="Sebastiani G."/>
            <person name="Rappsilber J."/>
            <person name="Allshire R.C."/>
            <person name="Reijns M.A.M."/>
            <person name="Dauber A."/>
            <person name="Sproul D."/>
            <person name="Jackson A.P."/>
        </authorList>
    </citation>
    <scope>MUTAGENESIS OF TRP-293; ILE-306 AND TRP-326</scope>
</reference>
<reference key="27">
    <citation type="journal article" date="2020" name="Nature">
        <title>SPOCD1 is an essential executor of piRNA-directed de novo DNA methylation.</title>
        <authorList>
            <person name="Zoch A."/>
            <person name="Auchynnikava T."/>
            <person name="Berrens R.V."/>
            <person name="Kabayama Y."/>
            <person name="Schoepp T."/>
            <person name="Heep M."/>
            <person name="Vasiliauskaite L."/>
            <person name="Perez-Rico Y.A."/>
            <person name="Cook A.G."/>
            <person name="Shkumatava A."/>
            <person name="Rappsilber J."/>
            <person name="Allshire R.C."/>
            <person name="O'Carroll D."/>
        </authorList>
    </citation>
    <scope>INTERACTION WITH SPOCD1</scope>
</reference>
<sequence>MPSSGPGDTSSSSLEREDDRKEGEEQEENRGKEERQEPSATARKVGRPGRKRKHPPVESSDTPKDPAVTTKSQPMAQDSGPSDLLPNGDLEKRSEPQPEEGSPAAGQKGGAPAEGEGTETPPEASRAVENGCCVTKEGRGASAGEGKEQKQTNIESMKMEGSRGRLRGGLGWESSLRQRPMPRLTFQAGDPYYISKRKRDEWLARWKREAEKKAKVIAVMNAVEENQASGESQKVEEASPPAVQQPTDPASPTVATTPEPVGGDAGDKNATKAADDEPEYEDGRGFGIGELVWGKLRGFSWWPGRIVSWWMTGRSRAAEGTRWVMWFGDGKFSVVCVEKLMPLSSFCSAFHQATYNKQPMYRKAIYEVLQVASSRAGKLFPACHDSDESDSGKAVEVQNKQMIEWALGGFQPSGPKGLEPPEEEKNPYKEVYTDMWVEPEAAAYAPPPPAKKPRKSTTEKPKVKEIIDERTRERLVYEVRQKCRNIEDICISCGSLNVTLEHPLFIGGMCQNCKNCFLECAYQYDDDGYQSYCTICCGGREVLMCGNNNCCRCFCVECVDLLVGPGAAQAAIKEDPWNCYMCGHKGTYGLLRRREDWPSRLQMFFANNHDQEFDPPKVYPPVPAEKRKPIRVLSLFDGIATGLLVLKDLGIQVDRYIASEVCEDSITVGMVRHQGKIMYVGDVRSVTQKHIQEWGPFDLVIGGSPCNDLSIVNPARKGLYEGTGRLFFEFYRLLHDARPKEGDDRPFFWLFENVVAMGVSDKRDISRFLESNPVMIDAKEVSAAHRARYFWGNLPGMNRPLASTVNDKLELQECLEHGRIAKFSKVRTITTRSNSIKQGKDQHFPVFMNEKEDILWCTEMERVFGFPVHYTDVSNMSRLARQRLLGRSWSVPVIRHLFAPLKEYFACV</sequence>
<evidence type="ECO:0000250" key="1"/>
<evidence type="ECO:0000250" key="2">
    <source>
        <dbReference type="UniProtKB" id="Q1LZ53"/>
    </source>
</evidence>
<evidence type="ECO:0000250" key="3">
    <source>
        <dbReference type="UniProtKB" id="Q9Y6K1"/>
    </source>
</evidence>
<evidence type="ECO:0000255" key="4">
    <source>
        <dbReference type="PROSITE-ProRule" id="PRU00162"/>
    </source>
</evidence>
<evidence type="ECO:0000255" key="5">
    <source>
        <dbReference type="PROSITE-ProRule" id="PRU00865"/>
    </source>
</evidence>
<evidence type="ECO:0000255" key="6">
    <source>
        <dbReference type="PROSITE-ProRule" id="PRU01016"/>
    </source>
</evidence>
<evidence type="ECO:0000255" key="7">
    <source>
        <dbReference type="PROSITE-ProRule" id="PRU10018"/>
    </source>
</evidence>
<evidence type="ECO:0000256" key="8">
    <source>
        <dbReference type="SAM" id="MobiDB-lite"/>
    </source>
</evidence>
<evidence type="ECO:0000269" key="9">
    <source>
    </source>
</evidence>
<evidence type="ECO:0000269" key="10">
    <source>
    </source>
</evidence>
<evidence type="ECO:0000269" key="11">
    <source>
    </source>
</evidence>
<evidence type="ECO:0000269" key="12">
    <source>
    </source>
</evidence>
<evidence type="ECO:0000269" key="13">
    <source>
    </source>
</evidence>
<evidence type="ECO:0000269" key="14">
    <source>
    </source>
</evidence>
<evidence type="ECO:0000269" key="15">
    <source>
    </source>
</evidence>
<evidence type="ECO:0000269" key="16">
    <source>
    </source>
</evidence>
<evidence type="ECO:0000269" key="17">
    <source>
    </source>
</evidence>
<evidence type="ECO:0000269" key="18">
    <source>
    </source>
</evidence>
<evidence type="ECO:0000269" key="19">
    <source>
    </source>
</evidence>
<evidence type="ECO:0000269" key="20">
    <source>
    </source>
</evidence>
<evidence type="ECO:0000269" key="21">
    <source>
    </source>
</evidence>
<evidence type="ECO:0000269" key="22">
    <source>
    </source>
</evidence>
<evidence type="ECO:0000269" key="23">
    <source>
    </source>
</evidence>
<evidence type="ECO:0000269" key="24">
    <source>
    </source>
</evidence>
<evidence type="ECO:0000269" key="25">
    <source>
    </source>
</evidence>
<evidence type="ECO:0000269" key="26">
    <source>
    </source>
</evidence>
<evidence type="ECO:0000269" key="27">
    <source>
    </source>
</evidence>
<evidence type="ECO:0000269" key="28">
    <source>
    </source>
</evidence>
<evidence type="ECO:0000269" key="29">
    <source>
    </source>
</evidence>
<evidence type="ECO:0000303" key="30">
    <source>
    </source>
</evidence>
<evidence type="ECO:0000303" key="31">
    <source>
    </source>
</evidence>
<evidence type="ECO:0000305" key="32"/>
<evidence type="ECO:0000312" key="33">
    <source>
        <dbReference type="MGI" id="MGI:1261827"/>
    </source>
</evidence>
<evidence type="ECO:0007744" key="34">
    <source>
    </source>
</evidence>
<evidence type="ECO:0007744" key="35">
    <source>
    </source>
</evidence>
<keyword id="KW-0002">3D-structure</keyword>
<keyword id="KW-0877">Alternative promoter usage</keyword>
<keyword id="KW-0156">Chromatin regulator</keyword>
<keyword id="KW-0158">Chromosome</keyword>
<keyword id="KW-0963">Cytoplasm</keyword>
<keyword id="KW-0238">DNA-binding</keyword>
<keyword id="KW-1017">Isopeptide bond</keyword>
<keyword id="KW-0479">Metal-binding</keyword>
<keyword id="KW-0488">Methylation</keyword>
<keyword id="KW-0489">Methyltransferase</keyword>
<keyword id="KW-0539">Nucleus</keyword>
<keyword id="KW-0597">Phosphoprotein</keyword>
<keyword id="KW-1185">Reference proteome</keyword>
<keyword id="KW-0678">Repressor</keyword>
<keyword id="KW-0949">S-adenosyl-L-methionine</keyword>
<keyword id="KW-0804">Transcription</keyword>
<keyword id="KW-0805">Transcription regulation</keyword>
<keyword id="KW-0808">Transferase</keyword>
<keyword id="KW-0832">Ubl conjugation</keyword>
<keyword id="KW-0862">Zinc</keyword>
<keyword id="KW-0863">Zinc-finger</keyword>
<organism>
    <name type="scientific">Mus musculus</name>
    <name type="common">Mouse</name>
    <dbReference type="NCBI Taxonomy" id="10090"/>
    <lineage>
        <taxon>Eukaryota</taxon>
        <taxon>Metazoa</taxon>
        <taxon>Chordata</taxon>
        <taxon>Craniata</taxon>
        <taxon>Vertebrata</taxon>
        <taxon>Euteleostomi</taxon>
        <taxon>Mammalia</taxon>
        <taxon>Eutheria</taxon>
        <taxon>Euarchontoglires</taxon>
        <taxon>Glires</taxon>
        <taxon>Rodentia</taxon>
        <taxon>Myomorpha</taxon>
        <taxon>Muroidea</taxon>
        <taxon>Muridae</taxon>
        <taxon>Murinae</taxon>
        <taxon>Mus</taxon>
        <taxon>Mus</taxon>
    </lineage>
</organism>
<gene>
    <name evidence="30 33" type="primary">Dnmt3a</name>
</gene>
<comment type="function">
    <text evidence="9 10 11 12 16 21 22 23 25 26 29">Required for genome-wide de novo methylation and is essential for the establishment of DNA methylation patterns during development (PubMed:10555141, PubMed:11399089, PubMed:11919202, PubMed:16567415, PubMed:17713477, PubMed:9662389). DNA methylation is coordinated with methylation of histones (PubMed:10555141, PubMed:11399089, PubMed:11919202, PubMed:16567415, PubMed:17713477, PubMed:9662389). It modifies DNA in a non-processive manner and also methylates non-CpG sites (PubMed:10555141, PubMed:11399089, PubMed:11919202, PubMed:16567415, PubMed:17713477, PubMed:9662389). May preferentially methylate DNA linker between 2 nucleosomal cores and is inhibited by histone H1 (PubMed:18823905). Plays a role in paternal and maternal imprinting (PubMed:15215868). Required for methylation of most imprinted loci in germ cells (PubMed:15215868). Acts as a transcriptional corepressor for ZBTB18 (PubMed:11350943). Recruited to trimethylated 'Lys-36' of histone H3 (H3K36me3) sites (PubMed:20547484). Can actively repress transcription through the recruitment of HDAC activity (PubMed:11350943). Also has weak auto-methylation activity on Cys-706 in absence of DNA (PubMed:21481189).</text>
</comment>
<comment type="catalytic activity">
    <reaction evidence="7 11 29">
        <text>a 2'-deoxycytidine in DNA + S-adenosyl-L-methionine = a 5-methyl-2'-deoxycytidine in DNA + S-adenosyl-L-homocysteine + H(+)</text>
        <dbReference type="Rhea" id="RHEA:13681"/>
        <dbReference type="Rhea" id="RHEA-COMP:11369"/>
        <dbReference type="Rhea" id="RHEA-COMP:11370"/>
        <dbReference type="ChEBI" id="CHEBI:15378"/>
        <dbReference type="ChEBI" id="CHEBI:57856"/>
        <dbReference type="ChEBI" id="CHEBI:59789"/>
        <dbReference type="ChEBI" id="CHEBI:85452"/>
        <dbReference type="ChEBI" id="CHEBI:85454"/>
        <dbReference type="EC" id="2.1.1.37"/>
    </reaction>
    <physiologicalReaction direction="left-to-right" evidence="11 29">
        <dbReference type="Rhea" id="RHEA:13682"/>
    </physiologicalReaction>
</comment>
<comment type="catalytic activity">
    <reaction evidence="26">
        <text>L-cysteinyl-[protein] + S-adenosyl-L-methionine = S-methyl-L-cysteinyl-[protein] + S-adenosyl-L-homocysteine + H(+)</text>
        <dbReference type="Rhea" id="RHEA:66544"/>
        <dbReference type="Rhea" id="RHEA-COMP:10131"/>
        <dbReference type="Rhea" id="RHEA-COMP:10132"/>
        <dbReference type="ChEBI" id="CHEBI:15378"/>
        <dbReference type="ChEBI" id="CHEBI:29950"/>
        <dbReference type="ChEBI" id="CHEBI:57856"/>
        <dbReference type="ChEBI" id="CHEBI:59789"/>
        <dbReference type="ChEBI" id="CHEBI:82612"/>
    </reaction>
    <physiologicalReaction direction="left-to-right" evidence="26">
        <dbReference type="Rhea" id="RHEA:66545"/>
    </physiologicalReaction>
</comment>
<comment type="activity regulation">
    <text evidence="18 22 26">Activated by binding to the regulatory factor DNMT3L (PubMed:15671018, PubMed:17713477, PubMed:21481189). Auto-methylation at Cys-706 in absence of DNA inactivates the DNA methyltransferase activity (PubMed:21481189).</text>
</comment>
<comment type="subunit">
    <text evidence="3 10 14 15 19 24 28">Heterotetramer composed of 1 DNMT3A homodimer and 2 DNMT3L subunits (DNMT3L-DNMT3A-DNMT3A-DNMT3L) (By similarity). Interacts with DNMT1 and DNMT3B (By similarity). Interacts with MPHOSPH8 (By similarity). Interacts with histone H3 that is not methylated at 'Lys-4' (H3K4) (By similarity). Binds the ZBTB18 transcriptional repressor (PubMed:11350943). Interacts with SETDB1 (By similarity). Associates with HDAC1 through its ADD domain (PubMed:11350943, PubMed:12616525). Interacts with UHRF1 (PubMed:19798101). Interacts with the PRC2/EED-EZH2 complex (PubMed:16357870). Interacts with UBC9, PIAS1 and PIAS2 (PubMed:14752048). Interacts with SPOCD1 (PubMed:32674113). Interacts with ZNF263; recruited to the SIX3 promoter along with other proteins involved in chromatin modification and transcriptional corepression where it contributes to transcriptional repression (By similarity).</text>
</comment>
<comment type="interaction">
    <interactant intactId="EBI-995154">
        <id>O88508</id>
    </interactant>
    <interactant intactId="EBI-3043871">
        <id>Q9CWR8</id>
        <label>Dnmt3l</label>
    </interactant>
    <organismsDiffer>false</organismsDiffer>
    <experiments>6</experiments>
</comment>
<comment type="interaction">
    <interactant intactId="EBI-995154">
        <id>O88508</id>
    </interactant>
    <interactant intactId="EBI-3043887">
        <id>Q60848</id>
        <label>Hells</label>
    </interactant>
    <organismsDiffer>false</organismsDiffer>
    <experiments>4</experiments>
</comment>
<comment type="interaction">
    <interactant intactId="EBI-995154">
        <id>O88508</id>
    </interactant>
    <interactant intactId="EBI-26687319">
        <id>P51608-1</id>
        <label>MECP2</label>
    </interactant>
    <organismsDiffer>true</organismsDiffer>
    <experiments>10</experiments>
</comment>
<comment type="interaction">
    <interactant intactId="EBI-15650457">
        <id>O88508-1</id>
    </interactant>
    <interactant intactId="EBI-3043871">
        <id>Q9CWR8</id>
        <label>Dnmt3l</label>
    </interactant>
    <organismsDiffer>false</organismsDiffer>
    <experiments>6</experiments>
</comment>
<comment type="interaction">
    <interactant intactId="EBI-15650457">
        <id>O88508-1</id>
    </interactant>
    <interactant intactId="EBI-15737169">
        <id>Q9Z148-2</id>
        <label>Ehmt2</label>
    </interactant>
    <organismsDiffer>false</organismsDiffer>
    <experiments>3</experiments>
</comment>
<comment type="subcellular location">
    <subcellularLocation>
        <location evidence="13 17 25">Nucleus</location>
    </subcellularLocation>
    <subcellularLocation>
        <location evidence="25">Chromosome</location>
    </subcellularLocation>
    <subcellularLocation>
        <location evidence="3">Cytoplasm</location>
    </subcellularLocation>
    <text evidence="25">Accumulates in the major satellite repeats at pericentric heterochromatin.</text>
</comment>
<comment type="alternative products">
    <event type="alternative promoter"/>
    <isoform>
        <id>O88508-1</id>
        <name>1</name>
        <sequence type="displayed"/>
    </isoform>
    <isoform>
        <id>O88508-2</id>
        <name>2</name>
        <sequence type="described" ref="VSP_009423"/>
    </isoform>
</comment>
<comment type="tissue specificity">
    <text evidence="13">Isoform 1 is expressed ubiquitously at low levels. Expression of isoform 2 is restricted to tissues containing cells which are undergoing active de novo methylation, including spleen, testis and thymus.</text>
</comment>
<comment type="developmental stage">
    <text evidence="9">At 7.5 dpc, the protein is moderately expressed in embryonic ectoderm and weakly in mesodermal cells. At 8.5 dpc and 9.5 dpc, the expression become ubiquitous with an increase in the somites and in the ventral part of the embryo.</text>
</comment>
<comment type="domain">
    <text evidence="25">The PWWP domain is essential for targeting to pericentric heterochromatin. It specifically recognizes and binds trimethylated 'Lys-36' of histone H3 (H3K36me3) (PubMed:20547484).</text>
</comment>
<comment type="PTM">
    <text evidence="26">Auto-methylated at Cys-706: auto-methylation takes place in absence of DNA substrate and inactivates the DNA methyltransferase activity (PubMed:21481189). Inactivation by auto-methylation may be used to inactivate unused DNA methyltransferases in the cell (PubMed:21481189).</text>
</comment>
<comment type="PTM">
    <text evidence="15">Sumoylated; sumoylation disrupts the ability to interact with histone deacetylases (HDAC1 and HDAC2) and repress transcription.</text>
</comment>
<comment type="similarity">
    <text evidence="6">Belongs to the class I-like SAM-binding methyltransferase superfamily. C5-methyltransferase family.</text>
</comment>
<comment type="sequence caution" evidence="32">
    <conflict type="erroneous initiation">
        <sequence resource="EMBL-CDS" id="BAB28644"/>
    </conflict>
    <text>Truncated N-terminus.</text>
</comment>
<name>DNM3A_MOUSE</name>
<dbReference type="EC" id="2.1.1.37" evidence="11 29"/>
<dbReference type="EC" id="2.1.1.-" evidence="26"/>
<dbReference type="EMBL" id="AF068625">
    <property type="protein sequence ID" value="AAC40177.2"/>
    <property type="molecule type" value="mRNA"/>
</dbReference>
<dbReference type="EMBL" id="AF480164">
    <property type="protein sequence ID" value="AAN40038.1"/>
    <property type="molecule type" value="mRNA"/>
</dbReference>
<dbReference type="EMBL" id="AK013096">
    <property type="protein sequence ID" value="BAB28644.2"/>
    <property type="status" value="ALT_INIT"/>
    <property type="molecule type" value="mRNA"/>
</dbReference>
<dbReference type="EMBL" id="AK090132">
    <property type="protein sequence ID" value="BAC41110.1"/>
    <property type="molecule type" value="mRNA"/>
</dbReference>
<dbReference type="EMBL" id="AK147263">
    <property type="protein sequence ID" value="BAE27806.1"/>
    <property type="molecule type" value="mRNA"/>
</dbReference>
<dbReference type="EMBL" id="AK147627">
    <property type="protein sequence ID" value="BAE28033.1"/>
    <property type="molecule type" value="mRNA"/>
</dbReference>
<dbReference type="EMBL" id="AK147642">
    <property type="protein sequence ID" value="BAE28043.1"/>
    <property type="molecule type" value="mRNA"/>
</dbReference>
<dbReference type="EMBL" id="AK147676">
    <property type="protein sequence ID" value="BAE28067.1"/>
    <property type="molecule type" value="mRNA"/>
</dbReference>
<dbReference type="EMBL" id="AK157792">
    <property type="protein sequence ID" value="BAE34200.1"/>
    <property type="molecule type" value="mRNA"/>
</dbReference>
<dbReference type="EMBL" id="BC007466">
    <property type="protein sequence ID" value="AAH07466.1"/>
    <property type="molecule type" value="mRNA"/>
</dbReference>
<dbReference type="CCDS" id="CCDS25784.1">
    <molecule id="O88508-2"/>
</dbReference>
<dbReference type="CCDS" id="CCDS36397.1">
    <molecule id="O88508-1"/>
</dbReference>
<dbReference type="RefSeq" id="NP_001258682.1">
    <molecule id="O88508-1"/>
    <property type="nucleotide sequence ID" value="NM_001271753.2"/>
</dbReference>
<dbReference type="RefSeq" id="NP_001408786.1">
    <molecule id="O88508-1"/>
    <property type="nucleotide sequence ID" value="NM_001421857.1"/>
</dbReference>
<dbReference type="RefSeq" id="NP_031898.1">
    <molecule id="O88508-1"/>
    <property type="nucleotide sequence ID" value="NM_007872.5"/>
</dbReference>
<dbReference type="RefSeq" id="NP_714965.1">
    <molecule id="O88508-2"/>
    <property type="nucleotide sequence ID" value="NM_153743.5"/>
</dbReference>
<dbReference type="RefSeq" id="XP_006515016.1">
    <property type="nucleotide sequence ID" value="XM_006514953.3"/>
</dbReference>
<dbReference type="RefSeq" id="XP_006515019.1">
    <molecule id="O88508-1"/>
    <property type="nucleotide sequence ID" value="XM_006514956.4"/>
</dbReference>
<dbReference type="RefSeq" id="XP_030102398.1">
    <molecule id="O88508-1"/>
    <property type="nucleotide sequence ID" value="XM_030246538.1"/>
</dbReference>
<dbReference type="RefSeq" id="XP_030102399.1">
    <molecule id="O88508-1"/>
    <property type="nucleotide sequence ID" value="XM_030246539.2"/>
</dbReference>
<dbReference type="RefSeq" id="XP_030102400.1">
    <molecule id="O88508-1"/>
    <property type="nucleotide sequence ID" value="XM_030246540.2"/>
</dbReference>
<dbReference type="PDB" id="3SW9">
    <property type="method" value="X-ray"/>
    <property type="resolution" value="3.05 A"/>
    <property type="chains" value="P/Q=39-50"/>
</dbReference>
<dbReference type="PDB" id="3SWC">
    <property type="method" value="X-ray"/>
    <property type="resolution" value="2.33 A"/>
    <property type="chains" value="P/Q=39-50"/>
</dbReference>
<dbReference type="PDBsum" id="3SW9"/>
<dbReference type="PDBsum" id="3SWC"/>
<dbReference type="SMR" id="O88508"/>
<dbReference type="BioGRID" id="199261">
    <property type="interactions" value="25"/>
</dbReference>
<dbReference type="CORUM" id="O88508"/>
<dbReference type="DIP" id="DIP-38005N"/>
<dbReference type="FunCoup" id="O88508">
    <property type="interactions" value="2763"/>
</dbReference>
<dbReference type="IntAct" id="O88508">
    <property type="interactions" value="15"/>
</dbReference>
<dbReference type="MINT" id="O88508"/>
<dbReference type="STRING" id="10090.ENSMUSP00000020991"/>
<dbReference type="BindingDB" id="O88508"/>
<dbReference type="ChEMBL" id="CHEMBL3108652"/>
<dbReference type="DrugCentral" id="O88508"/>
<dbReference type="REBASE" id="3747">
    <property type="entry name" value="M.MmuDnmt3A"/>
</dbReference>
<dbReference type="iPTMnet" id="O88508"/>
<dbReference type="PhosphoSitePlus" id="O88508"/>
<dbReference type="jPOST" id="O88508"/>
<dbReference type="PaxDb" id="10090-ENSMUSP00000020991"/>
<dbReference type="PeptideAtlas" id="O88508"/>
<dbReference type="ProteomicsDB" id="277363">
    <molecule id="O88508-1"/>
</dbReference>
<dbReference type="ProteomicsDB" id="277364">
    <molecule id="O88508-2"/>
</dbReference>
<dbReference type="Pumba" id="O88508"/>
<dbReference type="Antibodypedia" id="4006">
    <property type="antibodies" value="990 antibodies from 46 providers"/>
</dbReference>
<dbReference type="DNASU" id="13435"/>
<dbReference type="Ensembl" id="ENSMUST00000020991.15">
    <molecule id="O88508-1"/>
    <property type="protein sequence ID" value="ENSMUSP00000020991.9"/>
    <property type="gene ID" value="ENSMUSG00000020661.17"/>
</dbReference>
<dbReference type="Ensembl" id="ENSMUST00000172689.8">
    <molecule id="O88508-2"/>
    <property type="protein sequence ID" value="ENSMUSP00000133543.2"/>
    <property type="gene ID" value="ENSMUSG00000020661.17"/>
</dbReference>
<dbReference type="Ensembl" id="ENSMUST00000174817.8">
    <molecule id="O88508-1"/>
    <property type="protein sequence ID" value="ENSMUSP00000134009.2"/>
    <property type="gene ID" value="ENSMUSG00000020661.17"/>
</dbReference>
<dbReference type="GeneID" id="13435"/>
<dbReference type="KEGG" id="mmu:13435"/>
<dbReference type="UCSC" id="uc007mxb.1">
    <molecule id="O88508-1"/>
    <property type="organism name" value="mouse"/>
</dbReference>
<dbReference type="AGR" id="MGI:1261827"/>
<dbReference type="CTD" id="1788"/>
<dbReference type="MGI" id="MGI:1261827">
    <property type="gene designation" value="Dnmt3a"/>
</dbReference>
<dbReference type="VEuPathDB" id="HostDB:ENSMUSG00000020661"/>
<dbReference type="eggNOG" id="ENOG502QR6U">
    <property type="taxonomic scope" value="Eukaryota"/>
</dbReference>
<dbReference type="GeneTree" id="ENSGT00940000155459"/>
<dbReference type="HOGENOM" id="CLU_006958_9_1_1"/>
<dbReference type="InParanoid" id="O88508"/>
<dbReference type="OMA" id="HGRMAKF"/>
<dbReference type="OrthoDB" id="641149at2759"/>
<dbReference type="PhylomeDB" id="O88508"/>
<dbReference type="TreeFam" id="TF329039"/>
<dbReference type="BRENDA" id="2.1.1.37">
    <property type="organism ID" value="3474"/>
</dbReference>
<dbReference type="Reactome" id="R-MMU-212300">
    <property type="pathway name" value="PRC2 methylates histones and DNA"/>
</dbReference>
<dbReference type="Reactome" id="R-MMU-3214858">
    <property type="pathway name" value="RMTs methylate histone arginines"/>
</dbReference>
<dbReference type="BioGRID-ORCS" id="13435">
    <property type="hits" value="2 hits in 81 CRISPR screens"/>
</dbReference>
<dbReference type="ChiTaRS" id="Dnmt3a">
    <property type="organism name" value="mouse"/>
</dbReference>
<dbReference type="EvolutionaryTrace" id="O88508"/>
<dbReference type="PRO" id="PR:O88508"/>
<dbReference type="Proteomes" id="UP000000589">
    <property type="component" value="Chromosome 12"/>
</dbReference>
<dbReference type="RNAct" id="O88508">
    <property type="molecule type" value="protein"/>
</dbReference>
<dbReference type="Bgee" id="ENSMUSG00000020661">
    <property type="expression patterns" value="Expressed in urethra mesenchymal layer and 291 other cell types or tissues"/>
</dbReference>
<dbReference type="ExpressionAtlas" id="O88508">
    <property type="expression patterns" value="baseline and differential"/>
</dbReference>
<dbReference type="GO" id="GO:1902494">
    <property type="term" value="C:catalytic complex"/>
    <property type="evidence" value="ECO:0007669"/>
    <property type="project" value="Ensembl"/>
</dbReference>
<dbReference type="GO" id="GO:0000775">
    <property type="term" value="C:chromosome, centromeric region"/>
    <property type="evidence" value="ECO:0000314"/>
    <property type="project" value="UniProtKB"/>
</dbReference>
<dbReference type="GO" id="GO:0005737">
    <property type="term" value="C:cytoplasm"/>
    <property type="evidence" value="ECO:0000314"/>
    <property type="project" value="MGI"/>
</dbReference>
<dbReference type="GO" id="GO:0000791">
    <property type="term" value="C:euchromatin"/>
    <property type="evidence" value="ECO:0000250"/>
    <property type="project" value="UniProtKB"/>
</dbReference>
<dbReference type="GO" id="GO:0000792">
    <property type="term" value="C:heterochromatin"/>
    <property type="evidence" value="ECO:0000314"/>
    <property type="project" value="MGI"/>
</dbReference>
<dbReference type="GO" id="GO:0016363">
    <property type="term" value="C:nuclear matrix"/>
    <property type="evidence" value="ECO:0000250"/>
    <property type="project" value="UniProtKB"/>
</dbReference>
<dbReference type="GO" id="GO:0005654">
    <property type="term" value="C:nucleoplasm"/>
    <property type="evidence" value="ECO:0000304"/>
    <property type="project" value="Reactome"/>
</dbReference>
<dbReference type="GO" id="GO:0005634">
    <property type="term" value="C:nucleus"/>
    <property type="evidence" value="ECO:0000314"/>
    <property type="project" value="UniProtKB"/>
</dbReference>
<dbReference type="GO" id="GO:0001741">
    <property type="term" value="C:XY body"/>
    <property type="evidence" value="ECO:0000314"/>
    <property type="project" value="MGI"/>
</dbReference>
<dbReference type="GO" id="GO:0003682">
    <property type="term" value="F:chromatin binding"/>
    <property type="evidence" value="ECO:0007669"/>
    <property type="project" value="Ensembl"/>
</dbReference>
<dbReference type="GO" id="GO:0003886">
    <property type="term" value="F:DNA (cytosine-5-)-methyltransferase activity"/>
    <property type="evidence" value="ECO:0000314"/>
    <property type="project" value="MGI"/>
</dbReference>
<dbReference type="GO" id="GO:0051719">
    <property type="term" value="F:DNA (cytosine-5-)-methyltransferase activity, acting on CpN substrates"/>
    <property type="evidence" value="ECO:0000304"/>
    <property type="project" value="Reactome"/>
</dbReference>
<dbReference type="GO" id="GO:0003677">
    <property type="term" value="F:DNA binding"/>
    <property type="evidence" value="ECO:0000314"/>
    <property type="project" value="MGI"/>
</dbReference>
<dbReference type="GO" id="GO:0042802">
    <property type="term" value="F:identical protein binding"/>
    <property type="evidence" value="ECO:0007669"/>
    <property type="project" value="Ensembl"/>
</dbReference>
<dbReference type="GO" id="GO:0106222">
    <property type="term" value="F:lncRNA binding"/>
    <property type="evidence" value="ECO:0000314"/>
    <property type="project" value="MGI"/>
</dbReference>
<dbReference type="GO" id="GO:0106363">
    <property type="term" value="F:protein-cysteine methyltransferase activity"/>
    <property type="evidence" value="ECO:0000314"/>
    <property type="project" value="UniProtKB"/>
</dbReference>
<dbReference type="GO" id="GO:0000978">
    <property type="term" value="F:RNA polymerase II cis-regulatory region sequence-specific DNA binding"/>
    <property type="evidence" value="ECO:0007669"/>
    <property type="project" value="Ensembl"/>
</dbReference>
<dbReference type="GO" id="GO:0061629">
    <property type="term" value="F:RNA polymerase II-specific DNA-binding transcription factor binding"/>
    <property type="evidence" value="ECO:0007669"/>
    <property type="project" value="Ensembl"/>
</dbReference>
<dbReference type="GO" id="GO:0008270">
    <property type="term" value="F:zinc ion binding"/>
    <property type="evidence" value="ECO:0007669"/>
    <property type="project" value="UniProtKB-KW"/>
</dbReference>
<dbReference type="GO" id="GO:0141068">
    <property type="term" value="P:autosome genomic imprinting"/>
    <property type="evidence" value="ECO:0000314"/>
    <property type="project" value="BHF-UCL"/>
</dbReference>
<dbReference type="GO" id="GO:0071230">
    <property type="term" value="P:cellular response to amino acid stimulus"/>
    <property type="evidence" value="ECO:0000314"/>
    <property type="project" value="MGI"/>
</dbReference>
<dbReference type="GO" id="GO:1903926">
    <property type="term" value="P:cellular response to bisphenol A"/>
    <property type="evidence" value="ECO:0000314"/>
    <property type="project" value="MGI"/>
</dbReference>
<dbReference type="GO" id="GO:0071361">
    <property type="term" value="P:cellular response to ethanol"/>
    <property type="evidence" value="ECO:0007669"/>
    <property type="project" value="Ensembl"/>
</dbReference>
<dbReference type="GO" id="GO:0071456">
    <property type="term" value="P:cellular response to hypoxia"/>
    <property type="evidence" value="ECO:0007669"/>
    <property type="project" value="Ensembl"/>
</dbReference>
<dbReference type="GO" id="GO:0006346">
    <property type="term" value="P:DNA methylation-dependent constitutive heterochromatin formation"/>
    <property type="evidence" value="ECO:0000316"/>
    <property type="project" value="MGI"/>
</dbReference>
<dbReference type="GO" id="GO:0043045">
    <property type="term" value="P:epigenetic programming of gene expression"/>
    <property type="evidence" value="ECO:0000315"/>
    <property type="project" value="MGI"/>
</dbReference>
<dbReference type="GO" id="GO:0071514">
    <property type="term" value="P:genomic imprinting"/>
    <property type="evidence" value="ECO:0000315"/>
    <property type="project" value="UniProtKB"/>
</dbReference>
<dbReference type="GO" id="GO:0097284">
    <property type="term" value="P:hepatocyte apoptotic process"/>
    <property type="evidence" value="ECO:0007669"/>
    <property type="project" value="Ensembl"/>
</dbReference>
<dbReference type="GO" id="GO:0031507">
    <property type="term" value="P:heterochromatin formation"/>
    <property type="evidence" value="ECO:0000315"/>
    <property type="project" value="MGI"/>
</dbReference>
<dbReference type="GO" id="GO:0032259">
    <property type="term" value="P:methylation"/>
    <property type="evidence" value="ECO:0007669"/>
    <property type="project" value="UniProtKB-KW"/>
</dbReference>
<dbReference type="GO" id="GO:0044027">
    <property type="term" value="P:negative regulation of gene expression via chromosomal CpG island methylation"/>
    <property type="evidence" value="ECO:0000314"/>
    <property type="project" value="BHF-UCL"/>
</dbReference>
<dbReference type="GO" id="GO:0000122">
    <property type="term" value="P:negative regulation of transcription by RNA polymerase II"/>
    <property type="evidence" value="ECO:0007669"/>
    <property type="project" value="Ensembl"/>
</dbReference>
<dbReference type="GO" id="GO:0030182">
    <property type="term" value="P:neuron differentiation"/>
    <property type="evidence" value="ECO:0007669"/>
    <property type="project" value="Ensembl"/>
</dbReference>
<dbReference type="GO" id="GO:1900039">
    <property type="term" value="P:positive regulation of cellular response to hypoxia"/>
    <property type="evidence" value="ECO:0007669"/>
    <property type="project" value="Ensembl"/>
</dbReference>
<dbReference type="GO" id="GO:0009791">
    <property type="term" value="P:post-embryonic development"/>
    <property type="evidence" value="ECO:0000314"/>
    <property type="project" value="MGI"/>
</dbReference>
<dbReference type="GO" id="GO:0042220">
    <property type="term" value="P:response to cocaine"/>
    <property type="evidence" value="ECO:0007669"/>
    <property type="project" value="Ensembl"/>
</dbReference>
<dbReference type="GO" id="GO:0032355">
    <property type="term" value="P:response to estradiol"/>
    <property type="evidence" value="ECO:0007669"/>
    <property type="project" value="Ensembl"/>
</dbReference>
<dbReference type="GO" id="GO:0010212">
    <property type="term" value="P:response to ionizing radiation"/>
    <property type="evidence" value="ECO:0007669"/>
    <property type="project" value="Ensembl"/>
</dbReference>
<dbReference type="GO" id="GO:0010288">
    <property type="term" value="P:response to lead ion"/>
    <property type="evidence" value="ECO:0007669"/>
    <property type="project" value="Ensembl"/>
</dbReference>
<dbReference type="GO" id="GO:0009636">
    <property type="term" value="P:response to toxic substance"/>
    <property type="evidence" value="ECO:0007669"/>
    <property type="project" value="Ensembl"/>
</dbReference>
<dbReference type="GO" id="GO:0033189">
    <property type="term" value="P:response to vitamin A"/>
    <property type="evidence" value="ECO:0007669"/>
    <property type="project" value="Ensembl"/>
</dbReference>
<dbReference type="GO" id="GO:0009410">
    <property type="term" value="P:response to xenobiotic stimulus"/>
    <property type="evidence" value="ECO:0007669"/>
    <property type="project" value="Ensembl"/>
</dbReference>
<dbReference type="GO" id="GO:0007283">
    <property type="term" value="P:spermatogenesis"/>
    <property type="evidence" value="ECO:0000315"/>
    <property type="project" value="MGI"/>
</dbReference>
<dbReference type="GO" id="GO:0141196">
    <property type="term" value="P:transposable element silencing by piRNA-mediated DNA methylation"/>
    <property type="evidence" value="ECO:0000353"/>
    <property type="project" value="FlyBase"/>
</dbReference>
<dbReference type="CDD" id="cd11729">
    <property type="entry name" value="ADDz_Dnmt3a"/>
    <property type="match status" value="1"/>
</dbReference>
<dbReference type="CDD" id="cd20154">
    <property type="entry name" value="PWWP_DNMT3A"/>
    <property type="match status" value="1"/>
</dbReference>
<dbReference type="FunFam" id="3.40.50.150:FF:000008">
    <property type="entry name" value="DNA (Cytosine-5)-methyltransferase 3A isoform X1"/>
    <property type="match status" value="1"/>
</dbReference>
<dbReference type="FunFam" id="2.30.30.140:FF:000006">
    <property type="entry name" value="DNA (Cytosine-5)-methyltransferase 3B isoform 3"/>
    <property type="match status" value="1"/>
</dbReference>
<dbReference type="FunFam" id="1.10.720.50:FF:000002">
    <property type="entry name" value="DNA methyltransferase 3 alpha"/>
    <property type="match status" value="1"/>
</dbReference>
<dbReference type="FunFam" id="3.40.50.150:FF:000011">
    <property type="entry name" value="DNA methyltransferase 3 alpha"/>
    <property type="match status" value="1"/>
</dbReference>
<dbReference type="Gene3D" id="2.30.30.140">
    <property type="match status" value="1"/>
</dbReference>
<dbReference type="Gene3D" id="1.10.720.50">
    <property type="entry name" value="PWWP, helical domain"/>
    <property type="match status" value="1"/>
</dbReference>
<dbReference type="Gene3D" id="3.40.50.150">
    <property type="entry name" value="Vaccinia Virus protein VP39"/>
    <property type="match status" value="2"/>
</dbReference>
<dbReference type="IDEAL" id="IID50163"/>
<dbReference type="InterPro" id="IPR025766">
    <property type="entry name" value="ADD"/>
</dbReference>
<dbReference type="InterPro" id="IPR044108">
    <property type="entry name" value="ADD_DNMT3A"/>
</dbReference>
<dbReference type="InterPro" id="IPR018117">
    <property type="entry name" value="C5_DNA_meth_AS"/>
</dbReference>
<dbReference type="InterPro" id="IPR001525">
    <property type="entry name" value="C5_MeTfrase"/>
</dbReference>
<dbReference type="InterPro" id="IPR054724">
    <property type="entry name" value="DNM3A_N"/>
</dbReference>
<dbReference type="InterPro" id="IPR040552">
    <property type="entry name" value="DNMT3_ADD_GATA1-like"/>
</dbReference>
<dbReference type="InterPro" id="IPR049554">
    <property type="entry name" value="DNMT3_ADD_PHD"/>
</dbReference>
<dbReference type="InterPro" id="IPR000313">
    <property type="entry name" value="PWWP_dom"/>
</dbReference>
<dbReference type="InterPro" id="IPR029063">
    <property type="entry name" value="SAM-dependent_MTases_sf"/>
</dbReference>
<dbReference type="PANTHER" id="PTHR23068:SF10">
    <property type="entry name" value="DNA (CYTOSINE-5)-METHYLTRANSFERASE 3A"/>
    <property type="match status" value="1"/>
</dbReference>
<dbReference type="PANTHER" id="PTHR23068">
    <property type="entry name" value="DNA CYTOSINE-5- -METHYLTRANSFERASE 3-RELATED"/>
    <property type="match status" value="1"/>
</dbReference>
<dbReference type="Pfam" id="PF17980">
    <property type="entry name" value="ADD_DNMT3"/>
    <property type="match status" value="1"/>
</dbReference>
<dbReference type="Pfam" id="PF00145">
    <property type="entry name" value="DNA_methylase"/>
    <property type="match status" value="1"/>
</dbReference>
<dbReference type="Pfam" id="PF22855">
    <property type="entry name" value="DNM3A_N"/>
    <property type="match status" value="1"/>
</dbReference>
<dbReference type="Pfam" id="PF21255">
    <property type="entry name" value="DNMT3_ADD_GATA1-like"/>
    <property type="match status" value="1"/>
</dbReference>
<dbReference type="Pfam" id="PF00855">
    <property type="entry name" value="PWWP"/>
    <property type="match status" value="1"/>
</dbReference>
<dbReference type="SMART" id="SM00293">
    <property type="entry name" value="PWWP"/>
    <property type="match status" value="1"/>
</dbReference>
<dbReference type="SUPFAM" id="SSF53335">
    <property type="entry name" value="S-adenosyl-L-methionine-dependent methyltransferases"/>
    <property type="match status" value="1"/>
</dbReference>
<dbReference type="SUPFAM" id="SSF63748">
    <property type="entry name" value="Tudor/PWWP/MBT"/>
    <property type="match status" value="1"/>
</dbReference>
<dbReference type="PROSITE" id="PS51533">
    <property type="entry name" value="ADD"/>
    <property type="match status" value="1"/>
</dbReference>
<dbReference type="PROSITE" id="PS00094">
    <property type="entry name" value="C5_MTASE_1"/>
    <property type="match status" value="1"/>
</dbReference>
<dbReference type="PROSITE" id="PS50812">
    <property type="entry name" value="PWWP"/>
    <property type="match status" value="1"/>
</dbReference>
<dbReference type="PROSITE" id="PS51679">
    <property type="entry name" value="SAM_MT_C5"/>
    <property type="match status" value="1"/>
</dbReference>
<feature type="chain" id="PRO_0000088044" description="DNA (cytosine-5)-methyltransferase 3A">
    <location>
        <begin position="1"/>
        <end position="908"/>
    </location>
</feature>
<feature type="domain" description="PWWP" evidence="4">
    <location>
        <begin position="288"/>
        <end position="346"/>
    </location>
</feature>
<feature type="domain" description="ADD" evidence="5">
    <location>
        <begin position="478"/>
        <end position="610"/>
    </location>
</feature>
<feature type="domain" description="SAM-dependent MTase C5-type" evidence="6">
    <location>
        <begin position="630"/>
        <end position="908"/>
    </location>
</feature>
<feature type="zinc finger region" description="GATA-type; atypical" evidence="5">
    <location>
        <begin position="489"/>
        <end position="519"/>
    </location>
</feature>
<feature type="zinc finger region" description="PHD-type; atypical" evidence="5">
    <location>
        <begin position="530"/>
        <end position="586"/>
    </location>
</feature>
<feature type="region of interest" description="Disordered" evidence="8">
    <location>
        <begin position="1"/>
        <end position="183"/>
    </location>
</feature>
<feature type="region of interest" description="Interaction with DNMT1 and DNMT3B" evidence="1">
    <location>
        <begin position="195"/>
        <end position="399"/>
    </location>
</feature>
<feature type="region of interest" description="Disordered" evidence="8">
    <location>
        <begin position="226"/>
        <end position="281"/>
    </location>
</feature>
<feature type="region of interest" description="Disordered" evidence="8">
    <location>
        <begin position="443"/>
        <end position="462"/>
    </location>
</feature>
<feature type="region of interest" description="Interaction with the PRC2/EED-EZH2 complex" evidence="19">
    <location>
        <begin position="490"/>
        <end position="582"/>
    </location>
</feature>
<feature type="compositionally biased region" description="Low complexity" evidence="8">
    <location>
        <begin position="1"/>
        <end position="13"/>
    </location>
</feature>
<feature type="compositionally biased region" description="Basic and acidic residues" evidence="8">
    <location>
        <begin position="14"/>
        <end position="37"/>
    </location>
</feature>
<feature type="compositionally biased region" description="Basic residues" evidence="8">
    <location>
        <begin position="44"/>
        <end position="54"/>
    </location>
</feature>
<feature type="compositionally biased region" description="Polar residues" evidence="8">
    <location>
        <begin position="69"/>
        <end position="80"/>
    </location>
</feature>
<feature type="compositionally biased region" description="Low complexity" evidence="8">
    <location>
        <begin position="110"/>
        <end position="124"/>
    </location>
</feature>
<feature type="compositionally biased region" description="Polar residues" evidence="8">
    <location>
        <begin position="242"/>
        <end position="256"/>
    </location>
</feature>
<feature type="compositionally biased region" description="Basic and acidic residues" evidence="8">
    <location>
        <begin position="265"/>
        <end position="275"/>
    </location>
</feature>
<feature type="active site" evidence="6 7">
    <location>
        <position position="706"/>
    </location>
</feature>
<feature type="binding site" evidence="3">
    <location>
        <begin position="637"/>
        <end position="641"/>
    </location>
    <ligand>
        <name>S-adenosyl-L-methionine</name>
        <dbReference type="ChEBI" id="CHEBI:59789"/>
    </ligand>
</feature>
<feature type="binding site" evidence="3">
    <location>
        <position position="660"/>
    </location>
    <ligand>
        <name>S-adenosyl-L-methionine</name>
        <dbReference type="ChEBI" id="CHEBI:59789"/>
    </ligand>
</feature>
<feature type="binding site" evidence="3">
    <location>
        <begin position="682"/>
        <end position="684"/>
    </location>
    <ligand>
        <name>S-adenosyl-L-methionine</name>
        <dbReference type="ChEBI" id="CHEBI:59789"/>
    </ligand>
</feature>
<feature type="binding site" evidence="3">
    <location>
        <begin position="887"/>
        <end position="889"/>
    </location>
    <ligand>
        <name>S-adenosyl-L-methionine</name>
        <dbReference type="ChEBI" id="CHEBI:59789"/>
    </ligand>
</feature>
<feature type="modified residue" description="Phosphoserine" evidence="34">
    <location>
        <position position="102"/>
    </location>
</feature>
<feature type="modified residue" description="Phosphothreonine" evidence="2">
    <location>
        <position position="120"/>
    </location>
</feature>
<feature type="modified residue" description="Omega-N-methylarginine" evidence="35">
    <location>
        <position position="167"/>
    </location>
</feature>
<feature type="modified residue" description="Phosphoserine" evidence="3">
    <location>
        <position position="239"/>
    </location>
</feature>
<feature type="modified residue" description="Phosphoserine" evidence="3">
    <location>
        <position position="251"/>
    </location>
</feature>
<feature type="modified residue" description="Phosphothreonine" evidence="34">
    <location>
        <position position="257"/>
    </location>
</feature>
<feature type="modified residue" description="Phosphoserine" evidence="34">
    <location>
        <position position="386"/>
    </location>
</feature>
<feature type="modified residue" description="Phosphoserine" evidence="34">
    <location>
        <position position="389"/>
    </location>
</feature>
<feature type="modified residue" description="S-methylcysteine; by autocatalysis" evidence="26">
    <location>
        <position position="706"/>
    </location>
</feature>
<feature type="cross-link" description="Glycyl lysine isopeptide (Lys-Gly) (interchain with G-Cter in SUMO2)" evidence="3">
    <location>
        <position position="158"/>
    </location>
</feature>
<feature type="splice variant" id="VSP_009423" description="In isoform 2." evidence="30 31">
    <location>
        <begin position="1"/>
        <end position="219"/>
    </location>
</feature>
<feature type="mutagenesis site" description="Decreased protein abundance." evidence="27">
    <location>
        <position position="293"/>
    </location>
</feature>
<feature type="mutagenesis site" description="Prevents accumulation in pericentric heterochromatin." evidence="17">
    <original>WP</original>
    <variation>ST</variation>
    <location>
        <begin position="302"/>
        <end position="303"/>
    </location>
</feature>
<feature type="mutagenesis site" description="Decreased protein abundance." evidence="27">
    <original>I</original>
    <variation>N</variation>
    <location>
        <position position="306"/>
    </location>
</feature>
<feature type="mutagenesis site" description="The protein is stably expressed." evidence="27">
    <original>W</original>
    <variation>R</variation>
    <location>
        <position position="326"/>
    </location>
</feature>
<feature type="mutagenesis site" description="Reduces activity about 20-fold. Loss of substrate binding." evidence="20">
    <original>F</original>
    <variation>A</variation>
    <location>
        <position position="636"/>
    </location>
</feature>
<feature type="mutagenesis site" description="Reduces activity about 15-fold. Loss of substrate binding." evidence="20">
    <original>E</original>
    <variation>A</variation>
    <location>
        <position position="660"/>
    </location>
</feature>
<feature type="mutagenesis site" description="Strongly reduces substrate binding. No effect on activity." evidence="20">
    <original>D</original>
    <variation>A</variation>
    <location>
        <position position="682"/>
    </location>
</feature>
<feature type="mutagenesis site" description="No effect on localization." evidence="17">
    <original>PC</original>
    <variation>VD</variation>
    <location>
        <begin position="705"/>
        <end position="706"/>
    </location>
</feature>
<feature type="mutagenesis site" description="Reduces activity about 5-fold. Reduces DNA-binding capacity. Abolished cysteine-methylation." evidence="20 26">
    <original>C</original>
    <variation>A</variation>
    <location>
        <position position="706"/>
    </location>
</feature>
<feature type="mutagenesis site" description="Reduces activity about 3-fold." evidence="20">
    <original>N</original>
    <variation>Q</variation>
    <location>
        <position position="707"/>
    </location>
</feature>
<feature type="mutagenesis site" description="No effect on activity." evidence="20">
    <original>S</original>
    <variation>A</variation>
    <location>
        <position position="710"/>
    </location>
</feature>
<feature type="mutagenesis site" description="Reduces activity about 30-fold. Reduces DNA-binding capacity." evidence="20">
    <original>R</original>
    <variation>A</variation>
    <location>
        <position position="716"/>
    </location>
</feature>
<feature type="mutagenesis site" description="Reduces activity about 3-fold." evidence="20">
    <original>K</original>
    <variation>A</variation>
    <location>
        <position position="717"/>
    </location>
</feature>
<feature type="mutagenesis site" description="Loss of activity due to the incapacity to bind the regulatory subunit DNMT3L." evidence="22">
    <original>F</original>
    <variation>A</variation>
    <location>
        <position position="728"/>
    </location>
</feature>
<feature type="mutagenesis site" description="Reduces activity about 10-fold." evidence="20">
    <original>E</original>
    <variation>A</variation>
    <location>
        <position position="752"/>
    </location>
</feature>
<feature type="mutagenesis site" description="Reduces activity about 10-fold." evidence="20">
    <original>N</original>
    <variation>A</variation>
    <location>
        <position position="753"/>
    </location>
</feature>
<feature type="mutagenesis site" description="Reduces activity about 15-fold." evidence="20">
    <original>R</original>
    <variation>A</variation>
    <location>
        <position position="788"/>
    </location>
</feature>
<feature type="mutagenesis site" description="Reduces activity about 2-fold. Reduces DNA-binding capacity." evidence="20">
    <original>R</original>
    <variation>A</variation>
    <location>
        <position position="827"/>
    </location>
</feature>
<feature type="mutagenesis site" description="Reduces DNA-binding capacity. No effect on activity." evidence="20">
    <original>R</original>
    <variation>A</variation>
    <location>
        <position position="832"/>
    </location>
</feature>
<feature type="mutagenesis site" description="Reduces activity about 6-fold. Reduces DNA-binding capacity." evidence="20">
    <original>R</original>
    <variation>A</variation>
    <location>
        <position position="878"/>
    </location>
</feature>
<feature type="mutagenesis site" description="Loss of activity. Strongly reduces substrate binding." evidence="20">
    <original>R</original>
    <variation>A</variation>
    <location>
        <position position="881"/>
    </location>
</feature>
<feature type="mutagenesis site" description="Reduces activity about 3-fold. Reduces DNA-binding capacity." evidence="20">
    <original>R</original>
    <variation>A</variation>
    <location>
        <position position="883"/>
    </location>
</feature>
<feature type="sequence conflict" description="In Ref. 4; AAH07466." evidence="32" ref="4">
    <original>Q</original>
    <variation>P</variation>
    <location>
        <position position="151"/>
    </location>
</feature>
<feature type="sequence conflict" description="In Ref. 3; BAB28644." evidence="32" ref="3">
    <original>M</original>
    <variation>T</variation>
    <location>
        <position position="775"/>
    </location>
</feature>
<feature type="sequence conflict" description="In Ref. 3; BAB28644." evidence="32" ref="3">
    <original>V</original>
    <variation>G</variation>
    <location>
        <position position="781"/>
    </location>
</feature>
<feature type="sequence conflict" description="In Ref. 3; BAB28644." evidence="32" ref="3">
    <original>W</original>
    <variation>R</variation>
    <location>
        <position position="791"/>
    </location>
</feature>
<feature type="sequence conflict" description="In Ref. 3; BAB28644." evidence="32" ref="3">
    <original>L</original>
    <variation>P</variation>
    <location>
        <position position="809"/>
    </location>
</feature>
<feature type="sequence conflict" description="In Ref. 3; BAB28644." evidence="32" ref="3">
    <original>Y</original>
    <variation>I</variation>
    <location>
        <position position="904"/>
    </location>
</feature>
<accession>O88508</accession>
<accession>Q3TZK8</accession>
<accession>Q3UH24</accession>
<accession>Q8CJ60</accession>
<accession>Q922J0</accession>
<accession>Q9CSE1</accession>
<protein>
    <recommendedName>
        <fullName>DNA (cytosine-5)-methyltransferase 3A</fullName>
        <shortName>Dnmt3a</shortName>
        <ecNumber evidence="11 29">2.1.1.37</ecNumber>
    </recommendedName>
    <alternativeName>
        <fullName evidence="32">Cysteine methyltransferase DNMT3A</fullName>
        <ecNumber evidence="26">2.1.1.-</ecNumber>
    </alternativeName>
    <alternativeName>
        <fullName>DNA methyltransferase MmuIIIA</fullName>
        <shortName>DNA MTase MmuIIIA</shortName>
        <shortName>M.MmuIIIA</shortName>
    </alternativeName>
</protein>
<proteinExistence type="evidence at protein level"/>